<gene>
    <name evidence="1" type="primary">hemC</name>
    <name type="ordered locus">MM_1744</name>
</gene>
<feature type="chain" id="PRO_0000143026" description="Probable porphobilinogen deaminase">
    <location>
        <begin position="1"/>
        <end position="316"/>
    </location>
</feature>
<feature type="modified residue" description="S-(dipyrrolylmethanemethyl)cysteine" evidence="1">
    <location>
        <position position="234"/>
    </location>
</feature>
<keyword id="KW-0627">Porphyrin biosynthesis</keyword>
<keyword id="KW-0808">Transferase</keyword>
<dbReference type="EC" id="2.5.1.61" evidence="1"/>
<dbReference type="EMBL" id="AE008384">
    <property type="protein sequence ID" value="AAM31440.1"/>
    <property type="molecule type" value="Genomic_DNA"/>
</dbReference>
<dbReference type="RefSeq" id="WP_011033684.1">
    <property type="nucleotide sequence ID" value="NC_003901.1"/>
</dbReference>
<dbReference type="SMR" id="Q8PW57"/>
<dbReference type="GeneID" id="82160795"/>
<dbReference type="KEGG" id="mma:MM_1744"/>
<dbReference type="PATRIC" id="fig|192952.21.peg.2020"/>
<dbReference type="eggNOG" id="arCOG04299">
    <property type="taxonomic scope" value="Archaea"/>
</dbReference>
<dbReference type="HOGENOM" id="CLU_019704_0_2_2"/>
<dbReference type="UniPathway" id="UPA00251">
    <property type="reaction ID" value="UER00319"/>
</dbReference>
<dbReference type="Proteomes" id="UP000000595">
    <property type="component" value="Chromosome"/>
</dbReference>
<dbReference type="GO" id="GO:0005737">
    <property type="term" value="C:cytoplasm"/>
    <property type="evidence" value="ECO:0007669"/>
    <property type="project" value="TreeGrafter"/>
</dbReference>
<dbReference type="GO" id="GO:0004418">
    <property type="term" value="F:hydroxymethylbilane synthase activity"/>
    <property type="evidence" value="ECO:0007669"/>
    <property type="project" value="UniProtKB-UniRule"/>
</dbReference>
<dbReference type="GO" id="GO:0006782">
    <property type="term" value="P:protoporphyrinogen IX biosynthetic process"/>
    <property type="evidence" value="ECO:0007669"/>
    <property type="project" value="UniProtKB-UniRule"/>
</dbReference>
<dbReference type="CDD" id="cd13644">
    <property type="entry name" value="PBP2_HemC_archaea"/>
    <property type="match status" value="1"/>
</dbReference>
<dbReference type="FunFam" id="3.40.190.10:FF:000005">
    <property type="entry name" value="Porphobilinogen deaminase"/>
    <property type="match status" value="1"/>
</dbReference>
<dbReference type="Gene3D" id="3.40.190.10">
    <property type="entry name" value="Periplasmic binding protein-like II"/>
    <property type="match status" value="2"/>
</dbReference>
<dbReference type="Gene3D" id="3.30.160.40">
    <property type="entry name" value="Porphobilinogen deaminase, C-terminal domain"/>
    <property type="match status" value="1"/>
</dbReference>
<dbReference type="HAMAP" id="MF_00260">
    <property type="entry name" value="Porphobil_deam"/>
    <property type="match status" value="1"/>
</dbReference>
<dbReference type="InterPro" id="IPR000860">
    <property type="entry name" value="HemC"/>
</dbReference>
<dbReference type="InterPro" id="IPR022419">
    <property type="entry name" value="Porphobilin_deaminase_cofac_BS"/>
</dbReference>
<dbReference type="InterPro" id="IPR022417">
    <property type="entry name" value="Porphobilin_deaminase_N"/>
</dbReference>
<dbReference type="InterPro" id="IPR022418">
    <property type="entry name" value="Porphobilinogen_deaminase_C"/>
</dbReference>
<dbReference type="InterPro" id="IPR036803">
    <property type="entry name" value="Porphobilinogen_deaminase_C_sf"/>
</dbReference>
<dbReference type="NCBIfam" id="TIGR00212">
    <property type="entry name" value="hemC"/>
    <property type="match status" value="1"/>
</dbReference>
<dbReference type="PANTHER" id="PTHR11557">
    <property type="entry name" value="PORPHOBILINOGEN DEAMINASE"/>
    <property type="match status" value="1"/>
</dbReference>
<dbReference type="PANTHER" id="PTHR11557:SF0">
    <property type="entry name" value="PORPHOBILINOGEN DEAMINASE"/>
    <property type="match status" value="1"/>
</dbReference>
<dbReference type="Pfam" id="PF01379">
    <property type="entry name" value="Porphobil_deam"/>
    <property type="match status" value="1"/>
</dbReference>
<dbReference type="Pfam" id="PF03900">
    <property type="entry name" value="Porphobil_deamC"/>
    <property type="match status" value="1"/>
</dbReference>
<dbReference type="PIRSF" id="PIRSF001438">
    <property type="entry name" value="4pyrrol_synth_OHMeBilane_synth"/>
    <property type="match status" value="1"/>
</dbReference>
<dbReference type="PRINTS" id="PR00151">
    <property type="entry name" value="PORPHBDMNASE"/>
</dbReference>
<dbReference type="SUPFAM" id="SSF53850">
    <property type="entry name" value="Periplasmic binding protein-like II"/>
    <property type="match status" value="1"/>
</dbReference>
<dbReference type="SUPFAM" id="SSF54782">
    <property type="entry name" value="Porphobilinogen deaminase (hydroxymethylbilane synthase), C-terminal domain"/>
    <property type="match status" value="1"/>
</dbReference>
<dbReference type="PROSITE" id="PS00533">
    <property type="entry name" value="PORPHOBILINOGEN_DEAM"/>
    <property type="match status" value="1"/>
</dbReference>
<sequence>MIIGTRGSQLALAQTENVARLLKEKGVETSIKIIKTSGDRFTDRPLHAVSGGVGAFVRELDDVMLAGEIDIAVHSMKDMPTIRPKAIPTVAVLKRDTPFDILLTYDGTPLDELPEQSIIGTSSLRRTAQIRRYRPDIITQNLRGNIDTRLRKLREGQYDGIMLAKAGLERMGWEIEGEIFSPDFFCPSPNQGTVAVVTREGTEAEAAVSMLDHTESRIVTEIERILIAELGGGCTTPVGSYAEITPDRQEIHVRAEVLSLDGREAIRIDEFIPLRGGIEKARELGHRLVEMGGRRLAEEALLQISRGADSENSCDY</sequence>
<protein>
    <recommendedName>
        <fullName evidence="1">Probable porphobilinogen deaminase</fullName>
        <shortName evidence="1">PBG</shortName>
        <ecNumber evidence="1">2.5.1.61</ecNumber>
    </recommendedName>
    <alternativeName>
        <fullName evidence="1">Hydroxymethylbilane synthase</fullName>
        <shortName evidence="1">HMBS</shortName>
    </alternativeName>
    <alternativeName>
        <fullName evidence="1">Pre-uroporphyrinogen synthase</fullName>
    </alternativeName>
</protein>
<accession>Q8PW57</accession>
<name>HEM3_METMA</name>
<reference key="1">
    <citation type="journal article" date="2002" name="J. Mol. Microbiol. Biotechnol.">
        <title>The genome of Methanosarcina mazei: evidence for lateral gene transfer between Bacteria and Archaea.</title>
        <authorList>
            <person name="Deppenmeier U."/>
            <person name="Johann A."/>
            <person name="Hartsch T."/>
            <person name="Merkl R."/>
            <person name="Schmitz R.A."/>
            <person name="Martinez-Arias R."/>
            <person name="Henne A."/>
            <person name="Wiezer A."/>
            <person name="Baeumer S."/>
            <person name="Jacobi C."/>
            <person name="Brueggemann H."/>
            <person name="Lienard T."/>
            <person name="Christmann A."/>
            <person name="Boemecke M."/>
            <person name="Steckel S."/>
            <person name="Bhattacharyya A."/>
            <person name="Lykidis A."/>
            <person name="Overbeek R."/>
            <person name="Klenk H.-P."/>
            <person name="Gunsalus R.P."/>
            <person name="Fritz H.-J."/>
            <person name="Gottschalk G."/>
        </authorList>
    </citation>
    <scope>NUCLEOTIDE SEQUENCE [LARGE SCALE GENOMIC DNA]</scope>
    <source>
        <strain>ATCC BAA-159 / DSM 3647 / Goe1 / Go1 / JCM 11833 / OCM 88</strain>
    </source>
</reference>
<proteinExistence type="inferred from homology"/>
<comment type="function">
    <text evidence="1">Tetrapolymerization of the monopyrrole PBG into the hydroxymethylbilane pre-uroporphyrinogen in several discrete steps.</text>
</comment>
<comment type="catalytic activity">
    <reaction evidence="1">
        <text>4 porphobilinogen + H2O = hydroxymethylbilane + 4 NH4(+)</text>
        <dbReference type="Rhea" id="RHEA:13185"/>
        <dbReference type="ChEBI" id="CHEBI:15377"/>
        <dbReference type="ChEBI" id="CHEBI:28938"/>
        <dbReference type="ChEBI" id="CHEBI:57845"/>
        <dbReference type="ChEBI" id="CHEBI:58126"/>
        <dbReference type="EC" id="2.5.1.61"/>
    </reaction>
</comment>
<comment type="cofactor">
    <cofactor evidence="1">
        <name>dipyrromethane</name>
        <dbReference type="ChEBI" id="CHEBI:60342"/>
    </cofactor>
    <text evidence="1">Binds 1 dipyrromethane group covalently.</text>
</comment>
<comment type="pathway">
    <text evidence="1">Porphyrin-containing compound metabolism; protoporphyrin-IX biosynthesis; coproporphyrinogen-III from 5-aminolevulinate: step 2/4.</text>
</comment>
<comment type="miscellaneous">
    <text evidence="1">The porphobilinogen subunits are added to the dipyrromethane group.</text>
</comment>
<comment type="similarity">
    <text evidence="1">Belongs to the HMBS family.</text>
</comment>
<evidence type="ECO:0000255" key="1">
    <source>
        <dbReference type="HAMAP-Rule" id="MF_00260"/>
    </source>
</evidence>
<organism>
    <name type="scientific">Methanosarcina mazei (strain ATCC BAA-159 / DSM 3647 / Goe1 / Go1 / JCM 11833 / OCM 88)</name>
    <name type="common">Methanosarcina frisia</name>
    <dbReference type="NCBI Taxonomy" id="192952"/>
    <lineage>
        <taxon>Archaea</taxon>
        <taxon>Methanobacteriati</taxon>
        <taxon>Methanobacteriota</taxon>
        <taxon>Stenosarchaea group</taxon>
        <taxon>Methanomicrobia</taxon>
        <taxon>Methanosarcinales</taxon>
        <taxon>Methanosarcinaceae</taxon>
        <taxon>Methanosarcina</taxon>
    </lineage>
</organism>